<organism>
    <name type="scientific">Escherichia coli O127:H6 (strain E2348/69 / EPEC)</name>
    <dbReference type="NCBI Taxonomy" id="574521"/>
    <lineage>
        <taxon>Bacteria</taxon>
        <taxon>Pseudomonadati</taxon>
        <taxon>Pseudomonadota</taxon>
        <taxon>Gammaproteobacteria</taxon>
        <taxon>Enterobacterales</taxon>
        <taxon>Enterobacteriaceae</taxon>
        <taxon>Escherichia</taxon>
    </lineage>
</organism>
<dbReference type="EC" id="2.7.7.72" evidence="1"/>
<dbReference type="EC" id="3.1.3.-" evidence="1"/>
<dbReference type="EC" id="3.1.4.-" evidence="1"/>
<dbReference type="EMBL" id="FM180568">
    <property type="protein sequence ID" value="CAS10897.1"/>
    <property type="molecule type" value="Genomic_DNA"/>
</dbReference>
<dbReference type="RefSeq" id="WP_000708513.1">
    <property type="nucleotide sequence ID" value="NC_011601.1"/>
</dbReference>
<dbReference type="SMR" id="B7UIW4"/>
<dbReference type="KEGG" id="ecg:E2348C_3349"/>
<dbReference type="HOGENOM" id="CLU_015961_1_1_6"/>
<dbReference type="Proteomes" id="UP000008205">
    <property type="component" value="Chromosome"/>
</dbReference>
<dbReference type="GO" id="GO:0005524">
    <property type="term" value="F:ATP binding"/>
    <property type="evidence" value="ECO:0007669"/>
    <property type="project" value="UniProtKB-UniRule"/>
</dbReference>
<dbReference type="GO" id="GO:0004810">
    <property type="term" value="F:CCA tRNA nucleotidyltransferase activity"/>
    <property type="evidence" value="ECO:0007669"/>
    <property type="project" value="UniProtKB-UniRule"/>
</dbReference>
<dbReference type="GO" id="GO:0004112">
    <property type="term" value="F:cyclic-nucleotide phosphodiesterase activity"/>
    <property type="evidence" value="ECO:0007669"/>
    <property type="project" value="UniProtKB-UniRule"/>
</dbReference>
<dbReference type="GO" id="GO:0000287">
    <property type="term" value="F:magnesium ion binding"/>
    <property type="evidence" value="ECO:0007669"/>
    <property type="project" value="UniProtKB-UniRule"/>
</dbReference>
<dbReference type="GO" id="GO:0016791">
    <property type="term" value="F:phosphatase activity"/>
    <property type="evidence" value="ECO:0007669"/>
    <property type="project" value="UniProtKB-UniRule"/>
</dbReference>
<dbReference type="GO" id="GO:0000049">
    <property type="term" value="F:tRNA binding"/>
    <property type="evidence" value="ECO:0007669"/>
    <property type="project" value="UniProtKB-UniRule"/>
</dbReference>
<dbReference type="GO" id="GO:0042245">
    <property type="term" value="P:RNA repair"/>
    <property type="evidence" value="ECO:0007669"/>
    <property type="project" value="UniProtKB-KW"/>
</dbReference>
<dbReference type="GO" id="GO:0001680">
    <property type="term" value="P:tRNA 3'-terminal CCA addition"/>
    <property type="evidence" value="ECO:0007669"/>
    <property type="project" value="UniProtKB-UniRule"/>
</dbReference>
<dbReference type="CDD" id="cd00077">
    <property type="entry name" value="HDc"/>
    <property type="match status" value="1"/>
</dbReference>
<dbReference type="CDD" id="cd05398">
    <property type="entry name" value="NT_ClassII-CCAase"/>
    <property type="match status" value="1"/>
</dbReference>
<dbReference type="FunFam" id="1.10.3090.10:FF:000001">
    <property type="entry name" value="Multifunctional CCA protein"/>
    <property type="match status" value="1"/>
</dbReference>
<dbReference type="FunFam" id="3.30.460.10:FF:000016">
    <property type="entry name" value="Multifunctional CCA protein"/>
    <property type="match status" value="1"/>
</dbReference>
<dbReference type="Gene3D" id="3.30.460.10">
    <property type="entry name" value="Beta Polymerase, domain 2"/>
    <property type="match status" value="1"/>
</dbReference>
<dbReference type="Gene3D" id="1.10.3090.10">
    <property type="entry name" value="cca-adding enzyme, domain 2"/>
    <property type="match status" value="1"/>
</dbReference>
<dbReference type="HAMAP" id="MF_01261">
    <property type="entry name" value="CCA_bact_type1"/>
    <property type="match status" value="1"/>
</dbReference>
<dbReference type="HAMAP" id="MF_01262">
    <property type="entry name" value="CCA_bact_type2"/>
    <property type="match status" value="1"/>
</dbReference>
<dbReference type="InterPro" id="IPR012006">
    <property type="entry name" value="CCA_bact"/>
</dbReference>
<dbReference type="InterPro" id="IPR003607">
    <property type="entry name" value="HD/PDEase_dom"/>
</dbReference>
<dbReference type="InterPro" id="IPR006674">
    <property type="entry name" value="HD_domain"/>
</dbReference>
<dbReference type="InterPro" id="IPR043519">
    <property type="entry name" value="NT_sf"/>
</dbReference>
<dbReference type="InterPro" id="IPR002646">
    <property type="entry name" value="PolA_pol_head_dom"/>
</dbReference>
<dbReference type="InterPro" id="IPR032828">
    <property type="entry name" value="PolyA_RNA-bd"/>
</dbReference>
<dbReference type="InterPro" id="IPR050124">
    <property type="entry name" value="tRNA_CCA-adding_enzyme"/>
</dbReference>
<dbReference type="NCBIfam" id="NF008137">
    <property type="entry name" value="PRK10885.1"/>
    <property type="match status" value="1"/>
</dbReference>
<dbReference type="PANTHER" id="PTHR47545">
    <property type="entry name" value="MULTIFUNCTIONAL CCA PROTEIN"/>
    <property type="match status" value="1"/>
</dbReference>
<dbReference type="PANTHER" id="PTHR47545:SF1">
    <property type="entry name" value="MULTIFUNCTIONAL CCA PROTEIN"/>
    <property type="match status" value="1"/>
</dbReference>
<dbReference type="Pfam" id="PF01966">
    <property type="entry name" value="HD"/>
    <property type="match status" value="1"/>
</dbReference>
<dbReference type="Pfam" id="PF01743">
    <property type="entry name" value="PolyA_pol"/>
    <property type="match status" value="1"/>
</dbReference>
<dbReference type="Pfam" id="PF12627">
    <property type="entry name" value="PolyA_pol_RNAbd"/>
    <property type="match status" value="1"/>
</dbReference>
<dbReference type="PIRSF" id="PIRSF000813">
    <property type="entry name" value="CCA_bact"/>
    <property type="match status" value="1"/>
</dbReference>
<dbReference type="SUPFAM" id="SSF81301">
    <property type="entry name" value="Nucleotidyltransferase"/>
    <property type="match status" value="1"/>
</dbReference>
<dbReference type="SUPFAM" id="SSF81891">
    <property type="entry name" value="Poly A polymerase C-terminal region-like"/>
    <property type="match status" value="1"/>
</dbReference>
<dbReference type="PROSITE" id="PS51831">
    <property type="entry name" value="HD"/>
    <property type="match status" value="1"/>
</dbReference>
<evidence type="ECO:0000255" key="1">
    <source>
        <dbReference type="HAMAP-Rule" id="MF_01261"/>
    </source>
</evidence>
<feature type="chain" id="PRO_1000165119" description="Multifunctional CCA protein">
    <location>
        <begin position="1"/>
        <end position="412"/>
    </location>
</feature>
<feature type="domain" description="HD" evidence="1">
    <location>
        <begin position="228"/>
        <end position="329"/>
    </location>
</feature>
<feature type="binding site" evidence="1">
    <location>
        <position position="8"/>
    </location>
    <ligand>
        <name>ATP</name>
        <dbReference type="ChEBI" id="CHEBI:30616"/>
    </ligand>
</feature>
<feature type="binding site" evidence="1">
    <location>
        <position position="8"/>
    </location>
    <ligand>
        <name>CTP</name>
        <dbReference type="ChEBI" id="CHEBI:37563"/>
    </ligand>
</feature>
<feature type="binding site" evidence="1">
    <location>
        <position position="11"/>
    </location>
    <ligand>
        <name>ATP</name>
        <dbReference type="ChEBI" id="CHEBI:30616"/>
    </ligand>
</feature>
<feature type="binding site" evidence="1">
    <location>
        <position position="11"/>
    </location>
    <ligand>
        <name>CTP</name>
        <dbReference type="ChEBI" id="CHEBI:37563"/>
    </ligand>
</feature>
<feature type="binding site" evidence="1">
    <location>
        <position position="21"/>
    </location>
    <ligand>
        <name>Mg(2+)</name>
        <dbReference type="ChEBI" id="CHEBI:18420"/>
    </ligand>
</feature>
<feature type="binding site" evidence="1">
    <location>
        <position position="23"/>
    </location>
    <ligand>
        <name>Mg(2+)</name>
        <dbReference type="ChEBI" id="CHEBI:18420"/>
    </ligand>
</feature>
<feature type="binding site" evidence="1">
    <location>
        <position position="91"/>
    </location>
    <ligand>
        <name>ATP</name>
        <dbReference type="ChEBI" id="CHEBI:30616"/>
    </ligand>
</feature>
<feature type="binding site" evidence="1">
    <location>
        <position position="91"/>
    </location>
    <ligand>
        <name>CTP</name>
        <dbReference type="ChEBI" id="CHEBI:37563"/>
    </ligand>
</feature>
<feature type="binding site" evidence="1">
    <location>
        <position position="137"/>
    </location>
    <ligand>
        <name>ATP</name>
        <dbReference type="ChEBI" id="CHEBI:30616"/>
    </ligand>
</feature>
<feature type="binding site" evidence="1">
    <location>
        <position position="137"/>
    </location>
    <ligand>
        <name>CTP</name>
        <dbReference type="ChEBI" id="CHEBI:37563"/>
    </ligand>
</feature>
<feature type="binding site" evidence="1">
    <location>
        <position position="140"/>
    </location>
    <ligand>
        <name>ATP</name>
        <dbReference type="ChEBI" id="CHEBI:30616"/>
    </ligand>
</feature>
<feature type="binding site" evidence="1">
    <location>
        <position position="140"/>
    </location>
    <ligand>
        <name>CTP</name>
        <dbReference type="ChEBI" id="CHEBI:37563"/>
    </ligand>
</feature>
<sequence>MKIYLVGGAVRDALLGLPVKDRDWVVVGSTPQEMLDAGYQQVGRDFPVFLHPQTHEEYALARTERKSGSGYTGFTCYAAPDVTLEDDLKRRDLTINALAQDDNGEIIDPYNGLGDLQNRLLRHVSPAFGEDPLRVLRVARFAARYAHLSFRIADETLALMREMTHAGELEHLTPERVWKETENALTTRNPQVFFQVLRDCGALRVLFPEIDALFGVPAPARWHPEIDTGIHTLMTLSMVAMLSPQVDVRFATLCHDLGKGLTPPELWPRHHGHGPAGVKLVEQLCQRLRVPNEIRDLARLVAEFHDLIHTFPMLNPKTIVKLFDSIDAWRKPQRVEQLALTSEADVRGRTGFESADYPQGRWLREAWEVAQSVPTKAVVEAGFKGVEIREELTRRRIAAVASWKEQRCPKPD</sequence>
<protein>
    <recommendedName>
        <fullName evidence="1">Multifunctional CCA protein</fullName>
    </recommendedName>
    <domain>
        <recommendedName>
            <fullName evidence="1">CCA-adding enzyme</fullName>
            <ecNumber evidence="1">2.7.7.72</ecNumber>
        </recommendedName>
        <alternativeName>
            <fullName evidence="1">CCA tRNA nucleotidyltransferase</fullName>
        </alternativeName>
        <alternativeName>
            <fullName evidence="1">tRNA CCA-pyrophosphorylase</fullName>
        </alternativeName>
        <alternativeName>
            <fullName evidence="1">tRNA adenylyl-/cytidylyl-transferase</fullName>
        </alternativeName>
        <alternativeName>
            <fullName evidence="1">tRNA nucleotidyltransferase</fullName>
        </alternativeName>
        <alternativeName>
            <fullName evidence="1">tRNA-NT</fullName>
        </alternativeName>
    </domain>
    <domain>
        <recommendedName>
            <fullName evidence="1">2'-nucleotidase</fullName>
            <ecNumber evidence="1">3.1.3.-</ecNumber>
        </recommendedName>
    </domain>
    <domain>
        <recommendedName>
            <fullName evidence="1">2',3'-cyclic phosphodiesterase</fullName>
            <ecNumber evidence="1">3.1.4.-</ecNumber>
        </recommendedName>
    </domain>
    <domain>
        <recommendedName>
            <fullName evidence="1">Phosphatase</fullName>
            <ecNumber evidence="1">3.1.3.-</ecNumber>
        </recommendedName>
    </domain>
</protein>
<reference key="1">
    <citation type="journal article" date="2009" name="J. Bacteriol.">
        <title>Complete genome sequence and comparative genome analysis of enteropathogenic Escherichia coli O127:H6 strain E2348/69.</title>
        <authorList>
            <person name="Iguchi A."/>
            <person name="Thomson N.R."/>
            <person name="Ogura Y."/>
            <person name="Saunders D."/>
            <person name="Ooka T."/>
            <person name="Henderson I.R."/>
            <person name="Harris D."/>
            <person name="Asadulghani M."/>
            <person name="Kurokawa K."/>
            <person name="Dean P."/>
            <person name="Kenny B."/>
            <person name="Quail M.A."/>
            <person name="Thurston S."/>
            <person name="Dougan G."/>
            <person name="Hayashi T."/>
            <person name="Parkhill J."/>
            <person name="Frankel G."/>
        </authorList>
    </citation>
    <scope>NUCLEOTIDE SEQUENCE [LARGE SCALE GENOMIC DNA]</scope>
    <source>
        <strain>E2348/69 / EPEC</strain>
    </source>
</reference>
<keyword id="KW-0067">ATP-binding</keyword>
<keyword id="KW-0378">Hydrolase</keyword>
<keyword id="KW-0460">Magnesium</keyword>
<keyword id="KW-0479">Metal-binding</keyword>
<keyword id="KW-0511">Multifunctional enzyme</keyword>
<keyword id="KW-0533">Nickel</keyword>
<keyword id="KW-0547">Nucleotide-binding</keyword>
<keyword id="KW-0548">Nucleotidyltransferase</keyword>
<keyword id="KW-1185">Reference proteome</keyword>
<keyword id="KW-0692">RNA repair</keyword>
<keyword id="KW-0694">RNA-binding</keyword>
<keyword id="KW-0808">Transferase</keyword>
<keyword id="KW-0819">tRNA processing</keyword>
<name>CCA_ECO27</name>
<comment type="function">
    <text evidence="1">Catalyzes the addition and repair of the essential 3'-terminal CCA sequence in tRNAs without using a nucleic acid template. Adds these three nucleotides in the order of C, C, and A to the tRNA nucleotide-73, using CTP and ATP as substrates and producing inorganic pyrophosphate. tRNA 3'-terminal CCA addition is required both for tRNA processing and repair. Also involved in tRNA surveillance by mediating tandem CCA addition to generate a CCACCA at the 3' terminus of unstable tRNAs. While stable tRNAs receive only 3'-terminal CCA, unstable tRNAs are marked with CCACCA and rapidly degraded.</text>
</comment>
<comment type="catalytic activity">
    <reaction evidence="1">
        <text>a tRNA precursor + 2 CTP + ATP = a tRNA with a 3' CCA end + 3 diphosphate</text>
        <dbReference type="Rhea" id="RHEA:14433"/>
        <dbReference type="Rhea" id="RHEA-COMP:10465"/>
        <dbReference type="Rhea" id="RHEA-COMP:10468"/>
        <dbReference type="ChEBI" id="CHEBI:30616"/>
        <dbReference type="ChEBI" id="CHEBI:33019"/>
        <dbReference type="ChEBI" id="CHEBI:37563"/>
        <dbReference type="ChEBI" id="CHEBI:74896"/>
        <dbReference type="ChEBI" id="CHEBI:83071"/>
        <dbReference type="EC" id="2.7.7.72"/>
    </reaction>
</comment>
<comment type="catalytic activity">
    <reaction evidence="1">
        <text>a tRNA with a 3' CCA end + 2 CTP + ATP = a tRNA with a 3' CCACCA end + 3 diphosphate</text>
        <dbReference type="Rhea" id="RHEA:76235"/>
        <dbReference type="Rhea" id="RHEA-COMP:10468"/>
        <dbReference type="Rhea" id="RHEA-COMP:18655"/>
        <dbReference type="ChEBI" id="CHEBI:30616"/>
        <dbReference type="ChEBI" id="CHEBI:33019"/>
        <dbReference type="ChEBI" id="CHEBI:37563"/>
        <dbReference type="ChEBI" id="CHEBI:83071"/>
        <dbReference type="ChEBI" id="CHEBI:195187"/>
    </reaction>
    <physiologicalReaction direction="left-to-right" evidence="1">
        <dbReference type="Rhea" id="RHEA:76236"/>
    </physiologicalReaction>
</comment>
<comment type="cofactor">
    <cofactor evidence="1">
        <name>Mg(2+)</name>
        <dbReference type="ChEBI" id="CHEBI:18420"/>
    </cofactor>
    <text evidence="1">Magnesium is required for nucleotidyltransferase activity.</text>
</comment>
<comment type="cofactor">
    <cofactor evidence="1">
        <name>Ni(2+)</name>
        <dbReference type="ChEBI" id="CHEBI:49786"/>
    </cofactor>
    <text evidence="1">Nickel for phosphatase activity.</text>
</comment>
<comment type="subunit">
    <text evidence="1">Monomer. Can also form homodimers and oligomers.</text>
</comment>
<comment type="domain">
    <text evidence="1">Comprises two domains: an N-terminal domain containing the nucleotidyltransferase activity and a C-terminal HD domain associated with both phosphodiesterase and phosphatase activities.</text>
</comment>
<comment type="miscellaneous">
    <text evidence="1">A single active site specifically recognizes both ATP and CTP and is responsible for their addition.</text>
</comment>
<comment type="similarity">
    <text evidence="1">Belongs to the tRNA nucleotidyltransferase/poly(A) polymerase family. Bacterial CCA-adding enzyme type 1 subfamily.</text>
</comment>
<gene>
    <name evidence="1" type="primary">cca</name>
    <name type="ordered locus">E2348C_3349</name>
</gene>
<proteinExistence type="inferred from homology"/>
<accession>B7UIW4</accession>